<organism>
    <name type="scientific">Pyricularia oryzae (strain 70-15 / ATCC MYA-4617 / FGSC 8958)</name>
    <name type="common">Rice blast fungus</name>
    <name type="synonym">Magnaporthe oryzae</name>
    <dbReference type="NCBI Taxonomy" id="242507"/>
    <lineage>
        <taxon>Eukaryota</taxon>
        <taxon>Fungi</taxon>
        <taxon>Dikarya</taxon>
        <taxon>Ascomycota</taxon>
        <taxon>Pezizomycotina</taxon>
        <taxon>Sordariomycetes</taxon>
        <taxon>Sordariomycetidae</taxon>
        <taxon>Magnaporthales</taxon>
        <taxon>Pyriculariaceae</taxon>
        <taxon>Pyricularia</taxon>
    </lineage>
</organism>
<name>EIF3J_PYRO7</name>
<accession>A4QTA3</accession>
<accession>G4N4P2</accession>
<evidence type="ECO:0000255" key="1">
    <source>
        <dbReference type="HAMAP-Rule" id="MF_03009"/>
    </source>
</evidence>
<evidence type="ECO:0000256" key="2">
    <source>
        <dbReference type="SAM" id="MobiDB-lite"/>
    </source>
</evidence>
<evidence type="ECO:0000305" key="3"/>
<protein>
    <recommendedName>
        <fullName evidence="1">Eukaryotic translation initiation factor 3 subunit J</fullName>
        <shortName evidence="1">eIF3j</shortName>
    </recommendedName>
    <alternativeName>
        <fullName>Eukaryotic translation initiation factor 3 30 kDa subunit</fullName>
        <shortName>eIF-3 30 kDa</shortName>
    </alternativeName>
</protein>
<sequence>MPTKKWEDEESSSGSSDESSPAVAVSVPRRKFDDEEANDSDVLDSWDAAEDSEVEREKAKKAAEAKAKAEAEAKANKKTKAARINEHKQRRKEAEESDESDDETESQRRERLRRTEKEADLAHAEDLFGDIGVPAGRKVKAASTSVSIDPSDPSKTVELSDMPIFNPKTKTQFEDMRQALIPLITASSGRKPHYNNFMEEFVRQLCADMPSENIKKISSKLTALSNEKMKQEKAAAGTKKTKAAKTKTSLVANRAGVTDTNSYEDTFGDDDFM</sequence>
<keyword id="KW-0175">Coiled coil</keyword>
<keyword id="KW-0963">Cytoplasm</keyword>
<keyword id="KW-0396">Initiation factor</keyword>
<keyword id="KW-0648">Protein biosynthesis</keyword>
<keyword id="KW-1185">Reference proteome</keyword>
<proteinExistence type="inferred from homology"/>
<dbReference type="EMBL" id="CM001233">
    <property type="protein sequence ID" value="EHA52857.1"/>
    <property type="status" value="ALT_INIT"/>
    <property type="molecule type" value="Genomic_DNA"/>
</dbReference>
<dbReference type="RefSeq" id="XP_003712664.1">
    <property type="nucleotide sequence ID" value="XM_003712616.1"/>
</dbReference>
<dbReference type="SMR" id="A4QTA3"/>
<dbReference type="FunCoup" id="A4QTA3">
    <property type="interactions" value="97"/>
</dbReference>
<dbReference type="STRING" id="242507.A4QTA3"/>
<dbReference type="GeneID" id="2675355"/>
<dbReference type="KEGG" id="mgr:MGG_05134"/>
<dbReference type="eggNOG" id="KOG4813">
    <property type="taxonomic scope" value="Eukaryota"/>
</dbReference>
<dbReference type="InParanoid" id="A4QTA3"/>
<dbReference type="OrthoDB" id="20381at2759"/>
<dbReference type="Proteomes" id="UP000009058">
    <property type="component" value="Chromosome 3"/>
</dbReference>
<dbReference type="GO" id="GO:0016282">
    <property type="term" value="C:eukaryotic 43S preinitiation complex"/>
    <property type="evidence" value="ECO:0007669"/>
    <property type="project" value="UniProtKB-UniRule"/>
</dbReference>
<dbReference type="GO" id="GO:0033290">
    <property type="term" value="C:eukaryotic 48S preinitiation complex"/>
    <property type="evidence" value="ECO:0007669"/>
    <property type="project" value="UniProtKB-UniRule"/>
</dbReference>
<dbReference type="GO" id="GO:0005852">
    <property type="term" value="C:eukaryotic translation initiation factor 3 complex"/>
    <property type="evidence" value="ECO:0007669"/>
    <property type="project" value="UniProtKB-UniRule"/>
</dbReference>
<dbReference type="GO" id="GO:0003743">
    <property type="term" value="F:translation initiation factor activity"/>
    <property type="evidence" value="ECO:0007669"/>
    <property type="project" value="UniProtKB-UniRule"/>
</dbReference>
<dbReference type="GO" id="GO:0001732">
    <property type="term" value="P:formation of cytoplasmic translation initiation complex"/>
    <property type="evidence" value="ECO:0007669"/>
    <property type="project" value="UniProtKB-UniRule"/>
</dbReference>
<dbReference type="Gene3D" id="1.10.246.60">
    <property type="entry name" value="Eukaryotic translation initiation factor 3 like domains"/>
    <property type="match status" value="1"/>
</dbReference>
<dbReference type="HAMAP" id="MF_03009">
    <property type="entry name" value="eIF3j"/>
    <property type="match status" value="1"/>
</dbReference>
<dbReference type="InterPro" id="IPR023194">
    <property type="entry name" value="eIF3-like_dom_sf"/>
</dbReference>
<dbReference type="InterPro" id="IPR013906">
    <property type="entry name" value="eIF3j"/>
</dbReference>
<dbReference type="PANTHER" id="PTHR21681">
    <property type="entry name" value="EUKARYOTIC TRANSLATION INITIATION FACTOR 3 SUBUNIT J"/>
    <property type="match status" value="1"/>
</dbReference>
<dbReference type="PANTHER" id="PTHR21681:SF0">
    <property type="entry name" value="EUKARYOTIC TRANSLATION INITIATION FACTOR 3 SUBUNIT J"/>
    <property type="match status" value="1"/>
</dbReference>
<dbReference type="Pfam" id="PF08597">
    <property type="entry name" value="eIF3_subunit"/>
    <property type="match status" value="1"/>
</dbReference>
<feature type="chain" id="PRO_0000365156" description="Eukaryotic translation initiation factor 3 subunit J">
    <location>
        <begin position="1"/>
        <end position="273"/>
    </location>
</feature>
<feature type="region of interest" description="Disordered" evidence="2">
    <location>
        <begin position="1"/>
        <end position="158"/>
    </location>
</feature>
<feature type="coiled-coil region" evidence="1">
    <location>
        <begin position="50"/>
        <end position="97"/>
    </location>
</feature>
<feature type="compositionally biased region" description="Acidic residues" evidence="2">
    <location>
        <begin position="34"/>
        <end position="54"/>
    </location>
</feature>
<feature type="compositionally biased region" description="Basic and acidic residues" evidence="2">
    <location>
        <begin position="55"/>
        <end position="75"/>
    </location>
</feature>
<feature type="compositionally biased region" description="Acidic residues" evidence="2">
    <location>
        <begin position="95"/>
        <end position="104"/>
    </location>
</feature>
<feature type="compositionally biased region" description="Basic and acidic residues" evidence="2">
    <location>
        <begin position="105"/>
        <end position="126"/>
    </location>
</feature>
<reference key="1">
    <citation type="journal article" date="2005" name="Nature">
        <title>The genome sequence of the rice blast fungus Magnaporthe grisea.</title>
        <authorList>
            <person name="Dean R.A."/>
            <person name="Talbot N.J."/>
            <person name="Ebbole D.J."/>
            <person name="Farman M.L."/>
            <person name="Mitchell T.K."/>
            <person name="Orbach M.J."/>
            <person name="Thon M.R."/>
            <person name="Kulkarni R."/>
            <person name="Xu J.-R."/>
            <person name="Pan H."/>
            <person name="Read N.D."/>
            <person name="Lee Y.-H."/>
            <person name="Carbone I."/>
            <person name="Brown D."/>
            <person name="Oh Y.Y."/>
            <person name="Donofrio N."/>
            <person name="Jeong J.S."/>
            <person name="Soanes D.M."/>
            <person name="Djonovic S."/>
            <person name="Kolomiets E."/>
            <person name="Rehmeyer C."/>
            <person name="Li W."/>
            <person name="Harding M."/>
            <person name="Kim S."/>
            <person name="Lebrun M.-H."/>
            <person name="Bohnert H."/>
            <person name="Coughlan S."/>
            <person name="Butler J."/>
            <person name="Calvo S.E."/>
            <person name="Ma L.-J."/>
            <person name="Nicol R."/>
            <person name="Purcell S."/>
            <person name="Nusbaum C."/>
            <person name="Galagan J.E."/>
            <person name="Birren B.W."/>
        </authorList>
    </citation>
    <scope>NUCLEOTIDE SEQUENCE [LARGE SCALE GENOMIC DNA]</scope>
    <source>
        <strain>70-15 / ATCC MYA-4617 / FGSC 8958</strain>
    </source>
</reference>
<comment type="function">
    <text evidence="1">Component of the eukaryotic translation initiation factor 3 (eIF-3) complex, which is involved in protein synthesis of a specialized repertoire of mRNAs and, together with other initiation factors, stimulates binding of mRNA and methionyl-tRNAi to the 40S ribosome. The eIF-3 complex specifically targets and initiates translation of a subset of mRNAs involved in cell proliferation.</text>
</comment>
<comment type="subunit">
    <text evidence="1">Component of the eukaryotic translation initiation factor 3 (eIF-3) complex.</text>
</comment>
<comment type="subcellular location">
    <subcellularLocation>
        <location evidence="1">Cytoplasm</location>
    </subcellularLocation>
</comment>
<comment type="similarity">
    <text evidence="1">Belongs to the eIF-3 subunit J family.</text>
</comment>
<comment type="sequence caution" evidence="3">
    <conflict type="erroneous initiation">
        <sequence resource="EMBL-CDS" id="EHA52857"/>
    </conflict>
    <text>Extended N-terminus.</text>
</comment>
<gene>
    <name evidence="1" type="primary">HCR1</name>
    <name type="ORF">MGG_05134</name>
</gene>